<protein>
    <recommendedName>
        <fullName>Zinc finger CCCH domain-containing protein 15 homolog</fullName>
    </recommendedName>
</protein>
<organism>
    <name type="scientific">Drosophila pseudoobscura pseudoobscura</name>
    <name type="common">Fruit fly</name>
    <dbReference type="NCBI Taxonomy" id="46245"/>
    <lineage>
        <taxon>Eukaryota</taxon>
        <taxon>Metazoa</taxon>
        <taxon>Ecdysozoa</taxon>
        <taxon>Arthropoda</taxon>
        <taxon>Hexapoda</taxon>
        <taxon>Insecta</taxon>
        <taxon>Pterygota</taxon>
        <taxon>Neoptera</taxon>
        <taxon>Endopterygota</taxon>
        <taxon>Diptera</taxon>
        <taxon>Brachycera</taxon>
        <taxon>Muscomorpha</taxon>
        <taxon>Ephydroidea</taxon>
        <taxon>Drosophilidae</taxon>
        <taxon>Drosophila</taxon>
        <taxon>Sophophora</taxon>
    </lineage>
</organism>
<accession>Q28Y69</accession>
<gene>
    <name type="ORF">GA21225</name>
</gene>
<comment type="similarity">
    <text evidence="4">Belongs to the ZC3H15/TMA46 family.</text>
</comment>
<feature type="chain" id="PRO_0000324653" description="Zinc finger CCCH domain-containing protein 15 homolog">
    <location>
        <begin position="1"/>
        <end position="406"/>
    </location>
</feature>
<feature type="zinc finger region" description="C3H1-type 1" evidence="2">
    <location>
        <begin position="94"/>
        <end position="121"/>
    </location>
</feature>
<feature type="zinc finger region" description="C3H1-type 2" evidence="2">
    <location>
        <begin position="166"/>
        <end position="203"/>
    </location>
</feature>
<feature type="region of interest" description="Disordered" evidence="3">
    <location>
        <begin position="1"/>
        <end position="70"/>
    </location>
</feature>
<feature type="region of interest" description="Disordered" evidence="3">
    <location>
        <begin position="336"/>
        <end position="382"/>
    </location>
</feature>
<feature type="coiled-coil region" evidence="1">
    <location>
        <begin position="57"/>
        <end position="82"/>
    </location>
</feature>
<feature type="compositionally biased region" description="Low complexity" evidence="3">
    <location>
        <begin position="1"/>
        <end position="11"/>
    </location>
</feature>
<feature type="compositionally biased region" description="Basic and acidic residues" evidence="3">
    <location>
        <begin position="12"/>
        <end position="28"/>
    </location>
</feature>
<feature type="compositionally biased region" description="Low complexity" evidence="3">
    <location>
        <begin position="38"/>
        <end position="50"/>
    </location>
</feature>
<feature type="compositionally biased region" description="Basic and acidic residues" evidence="3">
    <location>
        <begin position="56"/>
        <end position="70"/>
    </location>
</feature>
<feature type="compositionally biased region" description="Low complexity" evidence="3">
    <location>
        <begin position="352"/>
        <end position="364"/>
    </location>
</feature>
<feature type="compositionally biased region" description="Low complexity" evidence="3">
    <location>
        <begin position="372"/>
        <end position="382"/>
    </location>
</feature>
<dbReference type="EMBL" id="CM000071">
    <property type="protein sequence ID" value="EAL26096.1"/>
    <property type="molecule type" value="Genomic_DNA"/>
</dbReference>
<dbReference type="FunCoup" id="Q28Y69">
    <property type="interactions" value="2775"/>
</dbReference>
<dbReference type="STRING" id="46245.Q28Y69"/>
<dbReference type="EnsemblMetazoa" id="FBtr0277724">
    <property type="protein sequence ID" value="FBpp0276162"/>
    <property type="gene ID" value="FBgn0081213"/>
</dbReference>
<dbReference type="KEGG" id="dpo:4805054"/>
<dbReference type="eggNOG" id="KOG1763">
    <property type="taxonomic scope" value="Eukaryota"/>
</dbReference>
<dbReference type="HOGENOM" id="CLU_042870_3_0_1"/>
<dbReference type="InParanoid" id="Q28Y69"/>
<dbReference type="OMA" id="AMIFKPV"/>
<dbReference type="PhylomeDB" id="Q28Y69"/>
<dbReference type="Proteomes" id="UP000001819">
    <property type="component" value="Chromosome 3"/>
</dbReference>
<dbReference type="Bgee" id="FBgn0081213">
    <property type="expression patterns" value="Expressed in female reproductive system and 3 other cell types or tissues"/>
</dbReference>
<dbReference type="GO" id="GO:0005829">
    <property type="term" value="C:cytosol"/>
    <property type="evidence" value="ECO:0007669"/>
    <property type="project" value="TreeGrafter"/>
</dbReference>
<dbReference type="GO" id="GO:0003729">
    <property type="term" value="F:mRNA binding"/>
    <property type="evidence" value="ECO:0007669"/>
    <property type="project" value="TreeGrafter"/>
</dbReference>
<dbReference type="GO" id="GO:0008270">
    <property type="term" value="F:zinc ion binding"/>
    <property type="evidence" value="ECO:0007669"/>
    <property type="project" value="UniProtKB-KW"/>
</dbReference>
<dbReference type="GO" id="GO:0002181">
    <property type="term" value="P:cytoplasmic translation"/>
    <property type="evidence" value="ECO:0007669"/>
    <property type="project" value="TreeGrafter"/>
</dbReference>
<dbReference type="Gene3D" id="6.20.400.10">
    <property type="match status" value="1"/>
</dbReference>
<dbReference type="Gene3D" id="4.10.1000.10">
    <property type="entry name" value="Zinc finger, CCCH-type"/>
    <property type="match status" value="1"/>
</dbReference>
<dbReference type="InterPro" id="IPR032378">
    <property type="entry name" value="ZC3H15/TMA46_C"/>
</dbReference>
<dbReference type="InterPro" id="IPR000571">
    <property type="entry name" value="Znf_CCCH"/>
</dbReference>
<dbReference type="InterPro" id="IPR036855">
    <property type="entry name" value="Znf_CCCH_sf"/>
</dbReference>
<dbReference type="PANTHER" id="PTHR12681:SF0">
    <property type="entry name" value="ZINC FINGER CCCH DOMAIN-CONTAINING PROTEIN 15"/>
    <property type="match status" value="1"/>
</dbReference>
<dbReference type="PANTHER" id="PTHR12681">
    <property type="entry name" value="ZINC FINGER-CONTAINING PROTEIN P48ZNF"/>
    <property type="match status" value="1"/>
</dbReference>
<dbReference type="Pfam" id="PF16543">
    <property type="entry name" value="DFRP_C"/>
    <property type="match status" value="1"/>
</dbReference>
<dbReference type="Pfam" id="PF00642">
    <property type="entry name" value="zf-CCCH"/>
    <property type="match status" value="1"/>
</dbReference>
<dbReference type="SMART" id="SM00356">
    <property type="entry name" value="ZnF_C3H1"/>
    <property type="match status" value="2"/>
</dbReference>
<dbReference type="SUPFAM" id="SSF90229">
    <property type="entry name" value="CCCH zinc finger"/>
    <property type="match status" value="1"/>
</dbReference>
<dbReference type="PROSITE" id="PS50103">
    <property type="entry name" value="ZF_C3H1"/>
    <property type="match status" value="2"/>
</dbReference>
<sequence length="406" mass="45816">MPPKKAPAGPSKKTEQKKKEKVIEDKTFGLKNKKGNKQQKFIQQVQKQVQAGGHHPRQDGDKKKDEKEKKLADLREMASIFKPVQTQKVDKGTDPKSVVCAFFKQGLCTKGDKCKFSHDLSLENKVEKRSMYVDMRDNEDDLMTNWDDAKLKEVVDKKHSEEKRRPTTEIICKFFLEAVEKSKYGWFWECPNGEKCIYRHALPPGYVLKRDKKKEDKPTEISLVDLIEKERAALGSNQTRVTLETFLAWKKRKLQEKKAKMVAEEERKKSDFSKGKQFGISGREMFSFNPDLVDDGPIEEGDAAFDVYKREDDDDDNAFEFKELDLAALSLAAKEVDGSGTIASSTRLLDQATEAAKTAAAEDGAASDDENPSSSAPANDAAPFNKDLFVDLAGELDDLDLDDEDD</sequence>
<evidence type="ECO:0000255" key="1"/>
<evidence type="ECO:0000255" key="2">
    <source>
        <dbReference type="PROSITE-ProRule" id="PRU00723"/>
    </source>
</evidence>
<evidence type="ECO:0000256" key="3">
    <source>
        <dbReference type="SAM" id="MobiDB-lite"/>
    </source>
</evidence>
<evidence type="ECO:0000305" key="4"/>
<keyword id="KW-0175">Coiled coil</keyword>
<keyword id="KW-0479">Metal-binding</keyword>
<keyword id="KW-1185">Reference proteome</keyword>
<keyword id="KW-0677">Repeat</keyword>
<keyword id="KW-0862">Zinc</keyword>
<keyword id="KW-0863">Zinc-finger</keyword>
<name>ZC3HF_DROPS</name>
<proteinExistence type="inferred from homology"/>
<reference key="1">
    <citation type="journal article" date="2005" name="Genome Res.">
        <title>Comparative genome sequencing of Drosophila pseudoobscura: chromosomal, gene, and cis-element evolution.</title>
        <authorList>
            <person name="Richards S."/>
            <person name="Liu Y."/>
            <person name="Bettencourt B.R."/>
            <person name="Hradecky P."/>
            <person name="Letovsky S."/>
            <person name="Nielsen R."/>
            <person name="Thornton K."/>
            <person name="Hubisz M.J."/>
            <person name="Chen R."/>
            <person name="Meisel R.P."/>
            <person name="Couronne O."/>
            <person name="Hua S."/>
            <person name="Smith M.A."/>
            <person name="Zhang P."/>
            <person name="Liu J."/>
            <person name="Bussemaker H.J."/>
            <person name="van Batenburg M.F."/>
            <person name="Howells S.L."/>
            <person name="Scherer S.E."/>
            <person name="Sodergren E."/>
            <person name="Matthews B.B."/>
            <person name="Crosby M.A."/>
            <person name="Schroeder A.J."/>
            <person name="Ortiz-Barrientos D."/>
            <person name="Rives C.M."/>
            <person name="Metzker M.L."/>
            <person name="Muzny D.M."/>
            <person name="Scott G."/>
            <person name="Steffen D."/>
            <person name="Wheeler D.A."/>
            <person name="Worley K.C."/>
            <person name="Havlak P."/>
            <person name="Durbin K.J."/>
            <person name="Egan A."/>
            <person name="Gill R."/>
            <person name="Hume J."/>
            <person name="Morgan M.B."/>
            <person name="Miner G."/>
            <person name="Hamilton C."/>
            <person name="Huang Y."/>
            <person name="Waldron L."/>
            <person name="Verduzco D."/>
            <person name="Clerc-Blankenburg K.P."/>
            <person name="Dubchak I."/>
            <person name="Noor M.A.F."/>
            <person name="Anderson W."/>
            <person name="White K.P."/>
            <person name="Clark A.G."/>
            <person name="Schaeffer S.W."/>
            <person name="Gelbart W.M."/>
            <person name="Weinstock G.M."/>
            <person name="Gibbs R.A."/>
        </authorList>
    </citation>
    <scope>NUCLEOTIDE SEQUENCE [LARGE SCALE GENOMIC DNA]</scope>
    <source>
        <strain>MV2-25 / Tucson 14011-0121.94</strain>
    </source>
</reference>